<organism>
    <name type="scientific">Yersinia pestis (strain Pestoides F)</name>
    <dbReference type="NCBI Taxonomy" id="386656"/>
    <lineage>
        <taxon>Bacteria</taxon>
        <taxon>Pseudomonadati</taxon>
        <taxon>Pseudomonadota</taxon>
        <taxon>Gammaproteobacteria</taxon>
        <taxon>Enterobacterales</taxon>
        <taxon>Yersiniaceae</taxon>
        <taxon>Yersinia</taxon>
    </lineage>
</organism>
<dbReference type="EC" id="2.1.1.166" evidence="1"/>
<dbReference type="EMBL" id="CP000668">
    <property type="protein sequence ID" value="ABP41902.1"/>
    <property type="molecule type" value="Genomic_DNA"/>
</dbReference>
<dbReference type="RefSeq" id="WP_002228196.1">
    <property type="nucleotide sequence ID" value="NZ_CP009715.1"/>
</dbReference>
<dbReference type="SMR" id="A4TRJ0"/>
<dbReference type="GeneID" id="57975211"/>
<dbReference type="KEGG" id="ypp:YPDSF_3552"/>
<dbReference type="PATRIC" id="fig|386656.14.peg.208"/>
<dbReference type="GO" id="GO:0005737">
    <property type="term" value="C:cytoplasm"/>
    <property type="evidence" value="ECO:0007669"/>
    <property type="project" value="UniProtKB-SubCell"/>
</dbReference>
<dbReference type="GO" id="GO:0008650">
    <property type="term" value="F:rRNA (uridine-2'-O-)-methyltransferase activity"/>
    <property type="evidence" value="ECO:0007669"/>
    <property type="project" value="UniProtKB-UniRule"/>
</dbReference>
<dbReference type="FunFam" id="3.40.50.150:FF:000005">
    <property type="entry name" value="Ribosomal RNA large subunit methyltransferase E"/>
    <property type="match status" value="1"/>
</dbReference>
<dbReference type="Gene3D" id="3.40.50.150">
    <property type="entry name" value="Vaccinia Virus protein VP39"/>
    <property type="match status" value="1"/>
</dbReference>
<dbReference type="HAMAP" id="MF_01547">
    <property type="entry name" value="RNA_methyltr_E"/>
    <property type="match status" value="1"/>
</dbReference>
<dbReference type="InterPro" id="IPR050082">
    <property type="entry name" value="RNA_methyltr_RlmE"/>
</dbReference>
<dbReference type="InterPro" id="IPR002877">
    <property type="entry name" value="RNA_MeTrfase_FtsJ_dom"/>
</dbReference>
<dbReference type="InterPro" id="IPR015507">
    <property type="entry name" value="rRNA-MeTfrase_E"/>
</dbReference>
<dbReference type="InterPro" id="IPR004512">
    <property type="entry name" value="rRNA_MeTrfase_gammaproteobac"/>
</dbReference>
<dbReference type="InterPro" id="IPR029063">
    <property type="entry name" value="SAM-dependent_MTases_sf"/>
</dbReference>
<dbReference type="NCBIfam" id="NF008390">
    <property type="entry name" value="PRK11188.1"/>
    <property type="match status" value="1"/>
</dbReference>
<dbReference type="NCBIfam" id="TIGR00438">
    <property type="entry name" value="rrmJ"/>
    <property type="match status" value="1"/>
</dbReference>
<dbReference type="PANTHER" id="PTHR10920">
    <property type="entry name" value="RIBOSOMAL RNA METHYLTRANSFERASE"/>
    <property type="match status" value="1"/>
</dbReference>
<dbReference type="PANTHER" id="PTHR10920:SF18">
    <property type="entry name" value="RRNA METHYLTRANSFERASE 2, MITOCHONDRIAL"/>
    <property type="match status" value="1"/>
</dbReference>
<dbReference type="Pfam" id="PF01728">
    <property type="entry name" value="FtsJ"/>
    <property type="match status" value="1"/>
</dbReference>
<dbReference type="PIRSF" id="PIRSF005461">
    <property type="entry name" value="23S_rRNA_mtase"/>
    <property type="match status" value="1"/>
</dbReference>
<dbReference type="SUPFAM" id="SSF53335">
    <property type="entry name" value="S-adenosyl-L-methionine-dependent methyltransferases"/>
    <property type="match status" value="1"/>
</dbReference>
<accession>A4TRJ0</accession>
<comment type="function">
    <text evidence="1">Specifically methylates the uridine in position 2552 of 23S rRNA at the 2'-O position of the ribose in the fully assembled 50S ribosomal subunit.</text>
</comment>
<comment type="catalytic activity">
    <reaction evidence="1">
        <text>uridine(2552) in 23S rRNA + S-adenosyl-L-methionine = 2'-O-methyluridine(2552) in 23S rRNA + S-adenosyl-L-homocysteine + H(+)</text>
        <dbReference type="Rhea" id="RHEA:42720"/>
        <dbReference type="Rhea" id="RHEA-COMP:10202"/>
        <dbReference type="Rhea" id="RHEA-COMP:10203"/>
        <dbReference type="ChEBI" id="CHEBI:15378"/>
        <dbReference type="ChEBI" id="CHEBI:57856"/>
        <dbReference type="ChEBI" id="CHEBI:59789"/>
        <dbReference type="ChEBI" id="CHEBI:65315"/>
        <dbReference type="ChEBI" id="CHEBI:74478"/>
        <dbReference type="EC" id="2.1.1.166"/>
    </reaction>
</comment>
<comment type="subcellular location">
    <subcellularLocation>
        <location evidence="1">Cytoplasm</location>
    </subcellularLocation>
</comment>
<comment type="similarity">
    <text evidence="1">Belongs to the class I-like SAM-binding methyltransferase superfamily. RNA methyltransferase RlmE family.</text>
</comment>
<name>RLME_YERPP</name>
<proteinExistence type="inferred from homology"/>
<feature type="chain" id="PRO_0000300601" description="Ribosomal RNA large subunit methyltransferase E">
    <location>
        <begin position="1"/>
        <end position="209"/>
    </location>
</feature>
<feature type="active site" description="Proton acceptor" evidence="1">
    <location>
        <position position="164"/>
    </location>
</feature>
<feature type="binding site" evidence="1">
    <location>
        <position position="63"/>
    </location>
    <ligand>
        <name>S-adenosyl-L-methionine</name>
        <dbReference type="ChEBI" id="CHEBI:59789"/>
    </ligand>
</feature>
<feature type="binding site" evidence="1">
    <location>
        <position position="65"/>
    </location>
    <ligand>
        <name>S-adenosyl-L-methionine</name>
        <dbReference type="ChEBI" id="CHEBI:59789"/>
    </ligand>
</feature>
<feature type="binding site" evidence="1">
    <location>
        <position position="83"/>
    </location>
    <ligand>
        <name>S-adenosyl-L-methionine</name>
        <dbReference type="ChEBI" id="CHEBI:59789"/>
    </ligand>
</feature>
<feature type="binding site" evidence="1">
    <location>
        <position position="99"/>
    </location>
    <ligand>
        <name>S-adenosyl-L-methionine</name>
        <dbReference type="ChEBI" id="CHEBI:59789"/>
    </ligand>
</feature>
<feature type="binding site" evidence="1">
    <location>
        <position position="124"/>
    </location>
    <ligand>
        <name>S-adenosyl-L-methionine</name>
        <dbReference type="ChEBI" id="CHEBI:59789"/>
    </ligand>
</feature>
<reference key="1">
    <citation type="submission" date="2007-02" db="EMBL/GenBank/DDBJ databases">
        <title>Complete sequence of chromosome of Yersinia pestis Pestoides F.</title>
        <authorList>
            <consortium name="US DOE Joint Genome Institute"/>
            <person name="Copeland A."/>
            <person name="Lucas S."/>
            <person name="Lapidus A."/>
            <person name="Barry K."/>
            <person name="Detter J.C."/>
            <person name="Glavina del Rio T."/>
            <person name="Hammon N."/>
            <person name="Israni S."/>
            <person name="Dalin E."/>
            <person name="Tice H."/>
            <person name="Pitluck S."/>
            <person name="Di Bartolo G."/>
            <person name="Chain P."/>
            <person name="Malfatti S."/>
            <person name="Shin M."/>
            <person name="Vergez L."/>
            <person name="Schmutz J."/>
            <person name="Larimer F."/>
            <person name="Land M."/>
            <person name="Hauser L."/>
            <person name="Worsham P."/>
            <person name="Chu M."/>
            <person name="Bearden S."/>
            <person name="Garcia E."/>
            <person name="Richardson P."/>
        </authorList>
    </citation>
    <scope>NUCLEOTIDE SEQUENCE [LARGE SCALE GENOMIC DNA]</scope>
    <source>
        <strain>Pestoides F</strain>
    </source>
</reference>
<protein>
    <recommendedName>
        <fullName evidence="1">Ribosomal RNA large subunit methyltransferase E</fullName>
        <ecNumber evidence="1">2.1.1.166</ecNumber>
    </recommendedName>
    <alternativeName>
        <fullName evidence="1">23S rRNA Um2552 methyltransferase</fullName>
    </alternativeName>
    <alternativeName>
        <fullName evidence="1">rRNA (uridine-2'-O-)-methyltransferase</fullName>
    </alternativeName>
</protein>
<gene>
    <name evidence="1" type="primary">rlmE</name>
    <name evidence="1" type="synonym">ftsJ</name>
    <name evidence="1" type="synonym">rrmJ</name>
    <name type="ordered locus">YPDSF_3552</name>
</gene>
<sequence>MSNKKRSASSSRWLQEHFSDKYVIQAQKKGLRSRAWFKLDEIQQSDKLFKQGMTVVDLGAAPGGWSQYAVTQIGSKGRVIACDLLPMDPIVGVDFLQGDFRDELVLKALLERVGDKKVQVVMCDMAPNMSGTPAVDIPKSMYLVELALDMCRDVLAPGGSFLVKVFQGDGFDEYLREIRSLFTKVKIRKPDASRARSREVYIVATGRKL</sequence>
<keyword id="KW-0963">Cytoplasm</keyword>
<keyword id="KW-0489">Methyltransferase</keyword>
<keyword id="KW-0698">rRNA processing</keyword>
<keyword id="KW-0949">S-adenosyl-L-methionine</keyword>
<keyword id="KW-0808">Transferase</keyword>
<evidence type="ECO:0000255" key="1">
    <source>
        <dbReference type="HAMAP-Rule" id="MF_01547"/>
    </source>
</evidence>